<comment type="function">
    <text evidence="1">Converts heme B (protoheme IX) to heme O by substitution of the vinyl group on carbon 2 of heme B porphyrin ring with a hydroxyethyl farnesyl side group.</text>
</comment>
<comment type="catalytic activity">
    <reaction evidence="1">
        <text>heme b + (2E,6E)-farnesyl diphosphate + H2O = Fe(II)-heme o + diphosphate</text>
        <dbReference type="Rhea" id="RHEA:28070"/>
        <dbReference type="ChEBI" id="CHEBI:15377"/>
        <dbReference type="ChEBI" id="CHEBI:33019"/>
        <dbReference type="ChEBI" id="CHEBI:60344"/>
        <dbReference type="ChEBI" id="CHEBI:60530"/>
        <dbReference type="ChEBI" id="CHEBI:175763"/>
        <dbReference type="EC" id="2.5.1.141"/>
    </reaction>
</comment>
<comment type="pathway">
    <text evidence="1">Porphyrin-containing compound metabolism; heme O biosynthesis; heme O from protoheme: step 1/1.</text>
</comment>
<comment type="subcellular location">
    <subcellularLocation>
        <location evidence="1">Cell inner membrane</location>
        <topology evidence="1">Multi-pass membrane protein</topology>
    </subcellularLocation>
</comment>
<comment type="miscellaneous">
    <text evidence="1">Carbon 2 of the heme B porphyrin ring is defined according to the Fischer nomenclature.</text>
</comment>
<comment type="similarity">
    <text evidence="1">Belongs to the UbiA prenyltransferase family. Protoheme IX farnesyltransferase subfamily.</text>
</comment>
<keyword id="KW-0997">Cell inner membrane</keyword>
<keyword id="KW-1003">Cell membrane</keyword>
<keyword id="KW-0350">Heme biosynthesis</keyword>
<keyword id="KW-0472">Membrane</keyword>
<keyword id="KW-1185">Reference proteome</keyword>
<keyword id="KW-0808">Transferase</keyword>
<keyword id="KW-0812">Transmembrane</keyword>
<keyword id="KW-1133">Transmembrane helix</keyword>
<evidence type="ECO:0000255" key="1">
    <source>
        <dbReference type="HAMAP-Rule" id="MF_00154"/>
    </source>
</evidence>
<sequence>MANSITHNTATVSASLNEDSLTESRLPTINDYLELCKIKVVALLVLTALVGLALAPDMGRGYFVQLLSLFGIGLLSSSAAVINHIVDSKIDAKMVRTKNRPLVRKAVSRRQALIFSAVIGTLGFSLLVFAANWLTAQMTLFALVGYAFVYTMFLKRATPQNIVIGGLAGAMPPLLGWISETGQLAAQPWILVMIIFTWTPPHFWALAIHRKADYAKAKIPMLPVTHGTDFTKTCILLYSLLLTVVCFLPFLIHMSGYLYLFVAMLINIIFIYKAVALKLSETSYGALNLFKYSILHLTLLFIALFADKFLM</sequence>
<reference key="1">
    <citation type="journal article" date="2008" name="BMC Genomics">
        <title>Genomics of an extreme psychrophile, Psychromonas ingrahamii.</title>
        <authorList>
            <person name="Riley M."/>
            <person name="Staley J.T."/>
            <person name="Danchin A."/>
            <person name="Wang T.Z."/>
            <person name="Brettin T.S."/>
            <person name="Hauser L.J."/>
            <person name="Land M.L."/>
            <person name="Thompson L.S."/>
        </authorList>
    </citation>
    <scope>NUCLEOTIDE SEQUENCE [LARGE SCALE GENOMIC DNA]</scope>
    <source>
        <strain>DSM 17664 / CCUG 51855 / 37</strain>
    </source>
</reference>
<organism>
    <name type="scientific">Psychromonas ingrahamii (strain DSM 17664 / CCUG 51855 / 37)</name>
    <dbReference type="NCBI Taxonomy" id="357804"/>
    <lineage>
        <taxon>Bacteria</taxon>
        <taxon>Pseudomonadati</taxon>
        <taxon>Pseudomonadota</taxon>
        <taxon>Gammaproteobacteria</taxon>
        <taxon>Alteromonadales</taxon>
        <taxon>Psychromonadaceae</taxon>
        <taxon>Psychromonas</taxon>
    </lineage>
</organism>
<dbReference type="EC" id="2.5.1.141" evidence="1"/>
<dbReference type="EMBL" id="CP000510">
    <property type="protein sequence ID" value="ABM04420.1"/>
    <property type="molecule type" value="Genomic_DNA"/>
</dbReference>
<dbReference type="RefSeq" id="WP_011770975.1">
    <property type="nucleotide sequence ID" value="NC_008709.1"/>
</dbReference>
<dbReference type="SMR" id="A1SY55"/>
<dbReference type="STRING" id="357804.Ping_2710"/>
<dbReference type="KEGG" id="pin:Ping_2710"/>
<dbReference type="eggNOG" id="COG0109">
    <property type="taxonomic scope" value="Bacteria"/>
</dbReference>
<dbReference type="HOGENOM" id="CLU_029631_0_2_6"/>
<dbReference type="OrthoDB" id="9814417at2"/>
<dbReference type="UniPathway" id="UPA00834">
    <property type="reaction ID" value="UER00712"/>
</dbReference>
<dbReference type="Proteomes" id="UP000000639">
    <property type="component" value="Chromosome"/>
</dbReference>
<dbReference type="GO" id="GO:0005886">
    <property type="term" value="C:plasma membrane"/>
    <property type="evidence" value="ECO:0007669"/>
    <property type="project" value="UniProtKB-SubCell"/>
</dbReference>
<dbReference type="GO" id="GO:0008495">
    <property type="term" value="F:protoheme IX farnesyltransferase activity"/>
    <property type="evidence" value="ECO:0007669"/>
    <property type="project" value="UniProtKB-UniRule"/>
</dbReference>
<dbReference type="GO" id="GO:0048034">
    <property type="term" value="P:heme O biosynthetic process"/>
    <property type="evidence" value="ECO:0007669"/>
    <property type="project" value="UniProtKB-UniRule"/>
</dbReference>
<dbReference type="CDD" id="cd13957">
    <property type="entry name" value="PT_UbiA_Cox10"/>
    <property type="match status" value="1"/>
</dbReference>
<dbReference type="Gene3D" id="1.10.357.140">
    <property type="entry name" value="UbiA prenyltransferase"/>
    <property type="match status" value="1"/>
</dbReference>
<dbReference type="HAMAP" id="MF_00154">
    <property type="entry name" value="CyoE_CtaB"/>
    <property type="match status" value="1"/>
</dbReference>
<dbReference type="InterPro" id="IPR006369">
    <property type="entry name" value="Protohaem_IX_farnesylTrfase"/>
</dbReference>
<dbReference type="InterPro" id="IPR000537">
    <property type="entry name" value="UbiA_prenyltransferase"/>
</dbReference>
<dbReference type="InterPro" id="IPR030470">
    <property type="entry name" value="UbiA_prenylTrfase_CS"/>
</dbReference>
<dbReference type="InterPro" id="IPR044878">
    <property type="entry name" value="UbiA_sf"/>
</dbReference>
<dbReference type="NCBIfam" id="TIGR01473">
    <property type="entry name" value="cyoE_ctaB"/>
    <property type="match status" value="1"/>
</dbReference>
<dbReference type="NCBIfam" id="NF003349">
    <property type="entry name" value="PRK04375.1-2"/>
    <property type="match status" value="1"/>
</dbReference>
<dbReference type="PANTHER" id="PTHR43448:SF7">
    <property type="entry name" value="4-HYDROXYBENZOATE SOLANESYLTRANSFERASE"/>
    <property type="match status" value="1"/>
</dbReference>
<dbReference type="PANTHER" id="PTHR43448">
    <property type="entry name" value="PROTOHEME IX FARNESYLTRANSFERASE, MITOCHONDRIAL"/>
    <property type="match status" value="1"/>
</dbReference>
<dbReference type="Pfam" id="PF01040">
    <property type="entry name" value="UbiA"/>
    <property type="match status" value="1"/>
</dbReference>
<dbReference type="PROSITE" id="PS00943">
    <property type="entry name" value="UBIA"/>
    <property type="match status" value="1"/>
</dbReference>
<proteinExistence type="inferred from homology"/>
<name>CYOE_PSYIN</name>
<gene>
    <name evidence="1" type="primary">cyoE</name>
    <name type="ordered locus">Ping_2710</name>
</gene>
<feature type="chain" id="PRO_0000326933" description="Protoheme IX farnesyltransferase">
    <location>
        <begin position="1"/>
        <end position="311"/>
    </location>
</feature>
<feature type="transmembrane region" description="Helical" evidence="1">
    <location>
        <begin position="38"/>
        <end position="58"/>
    </location>
</feature>
<feature type="transmembrane region" description="Helical" evidence="1">
    <location>
        <begin position="62"/>
        <end position="82"/>
    </location>
</feature>
<feature type="transmembrane region" description="Helical" evidence="1">
    <location>
        <begin position="113"/>
        <end position="133"/>
    </location>
</feature>
<feature type="transmembrane region" description="Helical" evidence="1">
    <location>
        <begin position="134"/>
        <end position="154"/>
    </location>
</feature>
<feature type="transmembrane region" description="Helical" evidence="1">
    <location>
        <begin position="162"/>
        <end position="182"/>
    </location>
</feature>
<feature type="transmembrane region" description="Helical" evidence="1">
    <location>
        <begin position="188"/>
        <end position="208"/>
    </location>
</feature>
<feature type="transmembrane region" description="Helical" evidence="1">
    <location>
        <begin position="230"/>
        <end position="250"/>
    </location>
</feature>
<feature type="transmembrane region" description="Helical" evidence="1">
    <location>
        <begin position="251"/>
        <end position="271"/>
    </location>
</feature>
<feature type="transmembrane region" description="Helical" evidence="1">
    <location>
        <begin position="286"/>
        <end position="306"/>
    </location>
</feature>
<accession>A1SY55</accession>
<protein>
    <recommendedName>
        <fullName evidence="1">Protoheme IX farnesyltransferase</fullName>
        <ecNumber evidence="1">2.5.1.141</ecNumber>
    </recommendedName>
    <alternativeName>
        <fullName evidence="1">Heme B farnesyltransferase</fullName>
    </alternativeName>
    <alternativeName>
        <fullName evidence="1">Heme O synthase</fullName>
    </alternativeName>
</protein>